<name>RSMH_LACLA</name>
<feature type="chain" id="PRO_0000108643" description="Ribosomal RNA small subunit methyltransferase H">
    <location>
        <begin position="1"/>
        <end position="317"/>
    </location>
</feature>
<feature type="binding site" evidence="1">
    <location>
        <begin position="37"/>
        <end position="39"/>
    </location>
    <ligand>
        <name>S-adenosyl-L-methionine</name>
        <dbReference type="ChEBI" id="CHEBI:59789"/>
    </ligand>
</feature>
<feature type="binding site" evidence="1">
    <location>
        <position position="56"/>
    </location>
    <ligand>
        <name>S-adenosyl-L-methionine</name>
        <dbReference type="ChEBI" id="CHEBI:59789"/>
    </ligand>
</feature>
<feature type="binding site" evidence="1">
    <location>
        <position position="85"/>
    </location>
    <ligand>
        <name>S-adenosyl-L-methionine</name>
        <dbReference type="ChEBI" id="CHEBI:59789"/>
    </ligand>
</feature>
<feature type="binding site" evidence="1">
    <location>
        <position position="106"/>
    </location>
    <ligand>
        <name>S-adenosyl-L-methionine</name>
        <dbReference type="ChEBI" id="CHEBI:59789"/>
    </ligand>
</feature>
<feature type="binding site" evidence="1">
    <location>
        <position position="113"/>
    </location>
    <ligand>
        <name>S-adenosyl-L-methionine</name>
        <dbReference type="ChEBI" id="CHEBI:59789"/>
    </ligand>
</feature>
<comment type="function">
    <text evidence="1">Specifically methylates the N4 position of cytidine in position 1402 (C1402) of 16S rRNA.</text>
</comment>
<comment type="catalytic activity">
    <reaction evidence="1">
        <text>cytidine(1402) in 16S rRNA + S-adenosyl-L-methionine = N(4)-methylcytidine(1402) in 16S rRNA + S-adenosyl-L-homocysteine + H(+)</text>
        <dbReference type="Rhea" id="RHEA:42928"/>
        <dbReference type="Rhea" id="RHEA-COMP:10286"/>
        <dbReference type="Rhea" id="RHEA-COMP:10287"/>
        <dbReference type="ChEBI" id="CHEBI:15378"/>
        <dbReference type="ChEBI" id="CHEBI:57856"/>
        <dbReference type="ChEBI" id="CHEBI:59789"/>
        <dbReference type="ChEBI" id="CHEBI:74506"/>
        <dbReference type="ChEBI" id="CHEBI:82748"/>
        <dbReference type="EC" id="2.1.1.199"/>
    </reaction>
</comment>
<comment type="subcellular location">
    <subcellularLocation>
        <location evidence="1">Cytoplasm</location>
    </subcellularLocation>
</comment>
<comment type="similarity">
    <text evidence="1">Belongs to the methyltransferase superfamily. RsmH family.</text>
</comment>
<sequence length="317" mass="36109">MPKTIAFKHDTVLLHETVDMLEVKPNGIYVDATLGGAGHSEYLLSKLTNGHLYSFDQDETAHENAKVRLSEQLAEDKVTLIKSNFRYLKSALAELGVTKIDGILYDLGVSSPQFDDSQRGFSYKKEARLDMRMDQNQTLSAYEVVNDYPYEALVRIFFRYGEDKFSKQIARKIEQARKIKPIETTIELADLIKSALPQKELKKKGHPAKRIFQAIRIEVNDELGAAEESIEQAIDLLKVDGRISVITFHSLEDRLTKTIFKEYSTVNVPKGLPMLPKDMEAKLKLINRKPVLASEEELEFNNRAHSAKLRVAQKQRD</sequence>
<evidence type="ECO:0000255" key="1">
    <source>
        <dbReference type="HAMAP-Rule" id="MF_01007"/>
    </source>
</evidence>
<keyword id="KW-0963">Cytoplasm</keyword>
<keyword id="KW-0489">Methyltransferase</keyword>
<keyword id="KW-1185">Reference proteome</keyword>
<keyword id="KW-0698">rRNA processing</keyword>
<keyword id="KW-0949">S-adenosyl-L-methionine</keyword>
<keyword id="KW-0808">Transferase</keyword>
<dbReference type="EC" id="2.1.1.199" evidence="1"/>
<dbReference type="EMBL" id="AE005176">
    <property type="protein sequence ID" value="AAK04963.1"/>
    <property type="molecule type" value="Genomic_DNA"/>
</dbReference>
<dbReference type="PIR" id="A86733">
    <property type="entry name" value="A86733"/>
</dbReference>
<dbReference type="RefSeq" id="NP_267021.1">
    <property type="nucleotide sequence ID" value="NC_002662.1"/>
</dbReference>
<dbReference type="RefSeq" id="WP_010905597.1">
    <property type="nucleotide sequence ID" value="NC_002662.1"/>
</dbReference>
<dbReference type="SMR" id="Q9CH73"/>
<dbReference type="PaxDb" id="272623-L87561"/>
<dbReference type="EnsemblBacteria" id="AAK04963">
    <property type="protein sequence ID" value="AAK04963"/>
    <property type="gene ID" value="L87561"/>
</dbReference>
<dbReference type="GeneID" id="89633007"/>
<dbReference type="KEGG" id="lla:L87561"/>
<dbReference type="PATRIC" id="fig|272623.7.peg.925"/>
<dbReference type="eggNOG" id="COG0275">
    <property type="taxonomic scope" value="Bacteria"/>
</dbReference>
<dbReference type="HOGENOM" id="CLU_038422_2_0_9"/>
<dbReference type="OrthoDB" id="9806637at2"/>
<dbReference type="Proteomes" id="UP000002196">
    <property type="component" value="Chromosome"/>
</dbReference>
<dbReference type="GO" id="GO:0005737">
    <property type="term" value="C:cytoplasm"/>
    <property type="evidence" value="ECO:0007669"/>
    <property type="project" value="UniProtKB-SubCell"/>
</dbReference>
<dbReference type="GO" id="GO:0071424">
    <property type="term" value="F:rRNA (cytosine-N4-)-methyltransferase activity"/>
    <property type="evidence" value="ECO:0007669"/>
    <property type="project" value="UniProtKB-UniRule"/>
</dbReference>
<dbReference type="GO" id="GO:0070475">
    <property type="term" value="P:rRNA base methylation"/>
    <property type="evidence" value="ECO:0007669"/>
    <property type="project" value="UniProtKB-UniRule"/>
</dbReference>
<dbReference type="FunFam" id="1.10.150.170:FF:000001">
    <property type="entry name" value="Ribosomal RNA small subunit methyltransferase H"/>
    <property type="match status" value="1"/>
</dbReference>
<dbReference type="Gene3D" id="1.10.150.170">
    <property type="entry name" value="Putative methyltransferase TM0872, insert domain"/>
    <property type="match status" value="1"/>
</dbReference>
<dbReference type="Gene3D" id="3.40.50.150">
    <property type="entry name" value="Vaccinia Virus protein VP39"/>
    <property type="match status" value="1"/>
</dbReference>
<dbReference type="HAMAP" id="MF_01007">
    <property type="entry name" value="16SrRNA_methyltr_H"/>
    <property type="match status" value="1"/>
</dbReference>
<dbReference type="InterPro" id="IPR002903">
    <property type="entry name" value="RsmH"/>
</dbReference>
<dbReference type="InterPro" id="IPR023397">
    <property type="entry name" value="SAM-dep_MeTrfase_MraW_recog"/>
</dbReference>
<dbReference type="InterPro" id="IPR029063">
    <property type="entry name" value="SAM-dependent_MTases_sf"/>
</dbReference>
<dbReference type="NCBIfam" id="TIGR00006">
    <property type="entry name" value="16S rRNA (cytosine(1402)-N(4))-methyltransferase RsmH"/>
    <property type="match status" value="1"/>
</dbReference>
<dbReference type="PANTHER" id="PTHR11265:SF0">
    <property type="entry name" value="12S RRNA N4-METHYLCYTIDINE METHYLTRANSFERASE"/>
    <property type="match status" value="1"/>
</dbReference>
<dbReference type="PANTHER" id="PTHR11265">
    <property type="entry name" value="S-ADENOSYL-METHYLTRANSFERASE MRAW"/>
    <property type="match status" value="1"/>
</dbReference>
<dbReference type="Pfam" id="PF01795">
    <property type="entry name" value="Methyltransf_5"/>
    <property type="match status" value="1"/>
</dbReference>
<dbReference type="PIRSF" id="PIRSF004486">
    <property type="entry name" value="MraW"/>
    <property type="match status" value="1"/>
</dbReference>
<dbReference type="SUPFAM" id="SSF81799">
    <property type="entry name" value="Putative methyltransferase TM0872, insert domain"/>
    <property type="match status" value="1"/>
</dbReference>
<dbReference type="SUPFAM" id="SSF53335">
    <property type="entry name" value="S-adenosyl-L-methionine-dependent methyltransferases"/>
    <property type="match status" value="1"/>
</dbReference>
<accession>Q9CH73</accession>
<proteinExistence type="inferred from homology"/>
<organism>
    <name type="scientific">Lactococcus lactis subsp. lactis (strain IL1403)</name>
    <name type="common">Streptococcus lactis</name>
    <dbReference type="NCBI Taxonomy" id="272623"/>
    <lineage>
        <taxon>Bacteria</taxon>
        <taxon>Bacillati</taxon>
        <taxon>Bacillota</taxon>
        <taxon>Bacilli</taxon>
        <taxon>Lactobacillales</taxon>
        <taxon>Streptococcaceae</taxon>
        <taxon>Lactococcus</taxon>
    </lineage>
</organism>
<protein>
    <recommendedName>
        <fullName evidence="1">Ribosomal RNA small subunit methyltransferase H</fullName>
        <ecNumber evidence="1">2.1.1.199</ecNumber>
    </recommendedName>
    <alternativeName>
        <fullName evidence="1">16S rRNA m(4)C1402 methyltransferase</fullName>
    </alternativeName>
    <alternativeName>
        <fullName evidence="1">rRNA (cytosine-N(4)-)-methyltransferase RsmH</fullName>
    </alternativeName>
</protein>
<reference key="1">
    <citation type="journal article" date="2001" name="Genome Res.">
        <title>The complete genome sequence of the lactic acid bacterium Lactococcus lactis ssp. lactis IL1403.</title>
        <authorList>
            <person name="Bolotin A."/>
            <person name="Wincker P."/>
            <person name="Mauger S."/>
            <person name="Jaillon O."/>
            <person name="Malarme K."/>
            <person name="Weissenbach J."/>
            <person name="Ehrlich S.D."/>
            <person name="Sorokin A."/>
        </authorList>
    </citation>
    <scope>NUCLEOTIDE SEQUENCE [LARGE SCALE GENOMIC DNA]</scope>
    <source>
        <strain>IL1403</strain>
    </source>
</reference>
<gene>
    <name evidence="1" type="primary">rsmH</name>
    <name type="synonym">mraW</name>
    <name type="ordered locus">LL0865</name>
    <name type="ORF">L87561</name>
</gene>